<sequence>MSQFFEAATPVAIPTNNTNGGSSDAGSAATGGAPVVGTTAQPTINHRLLLSLKEAAKIIGTKGSTISRIRAANAVKIGISEKVPGCSDRILSCAGNVINVANAIGDIVDVLNKRNPENEDAAEGEAEEHYYFHFLNHILPAPSKDEIRDLQQLEDIGYVRLIVANSHISSIIGKAGATIKSLINKHGVKIVASKDFLPASDERIIEIQGFPGSITNVLIEISEIILSDVDVRFSTERSYFPHLKKSSGEPTSPSTSSNTRIELKIPELYVGAIIGRGMNRIKNLKTFTKTNIVVERKDDDDKDENFRKFIITSKFPKNVKLAESMLLKNLNTEIEKRENYKRKLEAAEGDATVVTERSDSASFLEEKEEPQENHDNKEEQS</sequence>
<reference key="1">
    <citation type="journal article" date="1994" name="Yeast">
        <title>Analysis of a 17.4 kb DNA segment of yeast chromosome II encompassing the ribosomal protein L19 as well as proteins with homologies to components of the hnRNP and snRNP complexes and to the human proliferation-associated p120 antigen.</title>
        <authorList>
            <person name="van Dyck L."/>
            <person name="Jonniaux J.-L."/>
            <person name="Barreiros T.D.M."/>
            <person name="Kleine K."/>
            <person name="Goffeau A."/>
        </authorList>
    </citation>
    <scope>NUCLEOTIDE SEQUENCE [GENOMIC DNA]</scope>
    <source>
        <strain>ATCC 204508 / S288c</strain>
    </source>
</reference>
<reference key="2">
    <citation type="journal article" date="1994" name="EMBO J.">
        <title>Complete DNA sequence of yeast chromosome II.</title>
        <authorList>
            <person name="Feldmann H."/>
            <person name="Aigle M."/>
            <person name="Aljinovic G."/>
            <person name="Andre B."/>
            <person name="Baclet M.C."/>
            <person name="Barthe C."/>
            <person name="Baur A."/>
            <person name="Becam A.-M."/>
            <person name="Biteau N."/>
            <person name="Boles E."/>
            <person name="Brandt T."/>
            <person name="Brendel M."/>
            <person name="Brueckner M."/>
            <person name="Bussereau F."/>
            <person name="Christiansen C."/>
            <person name="Contreras R."/>
            <person name="Crouzet M."/>
            <person name="Cziepluch C."/>
            <person name="Demolis N."/>
            <person name="Delaveau T."/>
            <person name="Doignon F."/>
            <person name="Domdey H."/>
            <person name="Duesterhus S."/>
            <person name="Dubois E."/>
            <person name="Dujon B."/>
            <person name="El Bakkoury M."/>
            <person name="Entian K.-D."/>
            <person name="Feuermann M."/>
            <person name="Fiers W."/>
            <person name="Fobo G.M."/>
            <person name="Fritz C."/>
            <person name="Gassenhuber J."/>
            <person name="Glansdorff N."/>
            <person name="Goffeau A."/>
            <person name="Grivell L.A."/>
            <person name="de Haan M."/>
            <person name="Hein C."/>
            <person name="Herbert C.J."/>
            <person name="Hollenberg C.P."/>
            <person name="Holmstroem K."/>
            <person name="Jacq C."/>
            <person name="Jacquet M."/>
            <person name="Jauniaux J.-C."/>
            <person name="Jonniaux J.-L."/>
            <person name="Kallesoee T."/>
            <person name="Kiesau P."/>
            <person name="Kirchrath L."/>
            <person name="Koetter P."/>
            <person name="Korol S."/>
            <person name="Liebl S."/>
            <person name="Logghe M."/>
            <person name="Lohan A.J.E."/>
            <person name="Louis E.J."/>
            <person name="Li Z.Y."/>
            <person name="Maat M.J."/>
            <person name="Mallet L."/>
            <person name="Mannhaupt G."/>
            <person name="Messenguy F."/>
            <person name="Miosga T."/>
            <person name="Molemans F."/>
            <person name="Mueller S."/>
            <person name="Nasr F."/>
            <person name="Obermaier B."/>
            <person name="Perea J."/>
            <person name="Pierard A."/>
            <person name="Piravandi E."/>
            <person name="Pohl F.M."/>
            <person name="Pohl T.M."/>
            <person name="Potier S."/>
            <person name="Proft M."/>
            <person name="Purnelle B."/>
            <person name="Ramezani Rad M."/>
            <person name="Rieger M."/>
            <person name="Rose M."/>
            <person name="Schaaff-Gerstenschlaeger I."/>
            <person name="Scherens B."/>
            <person name="Schwarzlose C."/>
            <person name="Skala J."/>
            <person name="Slonimski P.P."/>
            <person name="Smits P.H.M."/>
            <person name="Souciet J.-L."/>
            <person name="Steensma H.Y."/>
            <person name="Stucka R."/>
            <person name="Urrestarazu L.A."/>
            <person name="van der Aart Q.J.M."/>
            <person name="Van Dyck L."/>
            <person name="Vassarotti A."/>
            <person name="Vetter I."/>
            <person name="Vierendeels F."/>
            <person name="Vissers S."/>
            <person name="Wagner G."/>
            <person name="de Wergifosse P."/>
            <person name="Wolfe K.H."/>
            <person name="Zagulski M."/>
            <person name="Zimmermann F.K."/>
            <person name="Mewes H.-W."/>
            <person name="Kleine K."/>
        </authorList>
    </citation>
    <scope>NUCLEOTIDE SEQUENCE [LARGE SCALE GENOMIC DNA]</scope>
    <source>
        <strain>ATCC 204508 / S288c</strain>
    </source>
</reference>
<reference key="3">
    <citation type="journal article" date="2014" name="G3 (Bethesda)">
        <title>The reference genome sequence of Saccharomyces cerevisiae: Then and now.</title>
        <authorList>
            <person name="Engel S.R."/>
            <person name="Dietrich F.S."/>
            <person name="Fisk D.G."/>
            <person name="Binkley G."/>
            <person name="Balakrishnan R."/>
            <person name="Costanzo M.C."/>
            <person name="Dwight S.S."/>
            <person name="Hitz B.C."/>
            <person name="Karra K."/>
            <person name="Nash R.S."/>
            <person name="Weng S."/>
            <person name="Wong E.D."/>
            <person name="Lloyd P."/>
            <person name="Skrzypek M.S."/>
            <person name="Miyasato S.R."/>
            <person name="Simison M."/>
            <person name="Cherry J.M."/>
        </authorList>
    </citation>
    <scope>GENOME REANNOTATION</scope>
    <source>
        <strain>ATCC 204508 / S288c</strain>
    </source>
</reference>
<reference key="4">
    <citation type="journal article" date="2007" name="Genome Res.">
        <title>Approaching a complete repository of sequence-verified protein-encoding clones for Saccharomyces cerevisiae.</title>
        <authorList>
            <person name="Hu Y."/>
            <person name="Rolfs A."/>
            <person name="Bhullar B."/>
            <person name="Murthy T.V.S."/>
            <person name="Zhu C."/>
            <person name="Berger M.F."/>
            <person name="Camargo A.A."/>
            <person name="Kelley F."/>
            <person name="McCarron S."/>
            <person name="Jepson D."/>
            <person name="Richardson A."/>
            <person name="Raphael J."/>
            <person name="Moreira D."/>
            <person name="Taycher E."/>
            <person name="Zuo D."/>
            <person name="Mohr S."/>
            <person name="Kane M.F."/>
            <person name="Williamson J."/>
            <person name="Simpson A.J.G."/>
            <person name="Bulyk M.L."/>
            <person name="Harlow E."/>
            <person name="Marsischky G."/>
            <person name="Kolodner R.D."/>
            <person name="LaBaer J."/>
        </authorList>
    </citation>
    <scope>NUCLEOTIDE SEQUENCE [GENOMIC DNA]</scope>
    <source>
        <strain>ATCC 204508 / S288c</strain>
    </source>
</reference>
<reference key="5">
    <citation type="journal article" date="1999" name="Am. J. Med. Genet.">
        <title>KH domain-containing proteins of yeast: absence of a fragile X gene homologue.</title>
        <authorList>
            <person name="Currie J.R."/>
            <person name="Brown W.T."/>
        </authorList>
    </citation>
    <scope>DOMAIN</scope>
</reference>
<reference key="6">
    <citation type="journal article" date="2002" name="EMBO J.">
        <title>The Khd1 protein, which has three KH RNA-binding motifs, is required for proper localization of ASH1 mRNA in yeast.</title>
        <authorList>
            <person name="Irie K."/>
            <person name="Tadauchi T."/>
            <person name="Takizawa P.A."/>
            <person name="Vale R.D."/>
            <person name="Matsumoto K."/>
            <person name="Herskowitz I."/>
        </authorList>
    </citation>
    <scope>RNA-BINDING</scope>
    <scope>FUNCTION</scope>
</reference>
<reference key="7">
    <citation type="journal article" date="2002" name="Mol. Cell. Biol.">
        <title>Yeast hnRNP K-like genes are involved in regulation of the telomeric position effect and telomere length.</title>
        <authorList>
            <person name="Denisenko O."/>
            <person name="Bomsztyk K."/>
        </authorList>
    </citation>
    <scope>FUNCTION</scope>
    <scope>SUBCELLULAR LOCATION</scope>
</reference>
<reference key="8">
    <citation type="journal article" date="2003" name="Nature">
        <title>Global analysis of protein localization in budding yeast.</title>
        <authorList>
            <person name="Huh W.-K."/>
            <person name="Falvo J.V."/>
            <person name="Gerke L.C."/>
            <person name="Carroll A.S."/>
            <person name="Howson R.W."/>
            <person name="Weissman J.S."/>
            <person name="O'Shea E.K."/>
        </authorList>
    </citation>
    <scope>SUBCELLULAR LOCATION [LARGE SCALE ANALYSIS]</scope>
</reference>
<reference key="9">
    <citation type="journal article" date="2003" name="Nature">
        <title>Global analysis of protein expression in yeast.</title>
        <authorList>
            <person name="Ghaemmaghami S."/>
            <person name="Huh W.-K."/>
            <person name="Bower K."/>
            <person name="Howson R.W."/>
            <person name="Belle A."/>
            <person name="Dephoure N."/>
            <person name="O'Shea E.K."/>
            <person name="Weissman J.S."/>
        </authorList>
    </citation>
    <scope>LEVEL OF PROTEIN EXPRESSION [LARGE SCALE ANALYSIS]</scope>
</reference>
<reference key="10">
    <citation type="journal article" date="2005" name="Cell. Mol. Biol. Lett.">
        <title>The binding activity of yeast RNAs to yeast Hek2p and mammalian hnRNP K proteins, determined using the three-hybrid system.</title>
        <authorList>
            <person name="Paziewska A."/>
            <person name="Wyrwicz L.S."/>
            <person name="Ostrowski J."/>
        </authorList>
    </citation>
    <scope>RNA-BINDING</scope>
</reference>
<reference key="11">
    <citation type="journal article" date="2007" name="J. Proteome Res.">
        <title>Large-scale phosphorylation analysis of alpha-factor-arrested Saccharomyces cerevisiae.</title>
        <authorList>
            <person name="Li X."/>
            <person name="Gerber S.A."/>
            <person name="Rudner A.D."/>
            <person name="Beausoleil S.A."/>
            <person name="Haas W."/>
            <person name="Villen J."/>
            <person name="Elias J.E."/>
            <person name="Gygi S.P."/>
        </authorList>
    </citation>
    <scope>IDENTIFICATION BY MASS SPECTROMETRY [LARGE SCALE ANALYSIS]</scope>
    <source>
        <strain>ADR376</strain>
    </source>
</reference>
<reference key="12">
    <citation type="journal article" date="2007" name="Mol. Cell">
        <title>Local activation of yeast ASH1 mRNA translation through phosphorylation of Khd1p by the casein kinase Yck1p.</title>
        <authorList>
            <person name="Paquin N."/>
            <person name="Menade M."/>
            <person name="Poirier G."/>
            <person name="Donato D."/>
            <person name="Drouet E."/>
            <person name="Chartrand P."/>
        </authorList>
    </citation>
    <scope>FUNCTION</scope>
    <scope>RNA-BINDING</scope>
    <scope>PHOSPHORYLATION</scope>
</reference>
<reference key="13">
    <citation type="journal article" date="2007" name="Proc. Natl. Acad. Sci. U.S.A.">
        <title>Analysis of phosphorylation sites on proteins from Saccharomyces cerevisiae by electron transfer dissociation (ETD) mass spectrometry.</title>
        <authorList>
            <person name="Chi A."/>
            <person name="Huttenhower C."/>
            <person name="Geer L.Y."/>
            <person name="Coon J.J."/>
            <person name="Syka J.E.P."/>
            <person name="Bai D.L."/>
            <person name="Shabanowitz J."/>
            <person name="Burke D.J."/>
            <person name="Troyanskaya O.G."/>
            <person name="Hunt D.F."/>
        </authorList>
    </citation>
    <scope>PHOSPHORYLATION [LARGE SCALE ANALYSIS] AT SER-358</scope>
    <scope>IDENTIFICATION BY MASS SPECTROMETRY [LARGE SCALE ANALYSIS]</scope>
</reference>
<reference key="14">
    <citation type="journal article" date="2008" name="J. Mol. Biol.">
        <title>Epistatic interaction between the K-homology domain protein HEK2 and SIR1 at HMR and telomeres in yeast.</title>
        <authorList>
            <person name="Denisenko O."/>
            <person name="Bomsztyk K."/>
        </authorList>
    </citation>
    <scope>FUNCTION</scope>
    <scope>SUBCELLULAR LOCATION</scope>
</reference>
<reference key="15">
    <citation type="journal article" date="2008" name="Mol. Cell. Proteomics">
        <title>A multidimensional chromatography technology for in-depth phosphoproteome analysis.</title>
        <authorList>
            <person name="Albuquerque C.P."/>
            <person name="Smolka M.B."/>
            <person name="Payne S.H."/>
            <person name="Bafna V."/>
            <person name="Eng J."/>
            <person name="Zhou H."/>
        </authorList>
    </citation>
    <scope>PHOSPHORYLATION [LARGE SCALE ANALYSIS] AT SER-360 AND SER-362</scope>
    <scope>IDENTIFICATION BY MASS SPECTROMETRY [LARGE SCALE ANALYSIS]</scope>
</reference>
<reference key="16">
    <citation type="journal article" date="2008" name="RNA">
        <title>Distinct roles for Khd1p in the localization and expression of bud-localized mRNAs in yeast.</title>
        <authorList>
            <person name="Hasegawa Y."/>
            <person name="Irie K."/>
            <person name="Gerber A.P."/>
        </authorList>
    </citation>
    <scope>FUNCTION</scope>
    <scope>RNA-BINDING</scope>
</reference>
<reference key="17">
    <citation type="journal article" date="2009" name="Science">
        <title>Global analysis of Cdk1 substrate phosphorylation sites provides insights into evolution.</title>
        <authorList>
            <person name="Holt L.J."/>
            <person name="Tuch B.B."/>
            <person name="Villen J."/>
            <person name="Johnson A.D."/>
            <person name="Gygi S.P."/>
            <person name="Morgan D.O."/>
        </authorList>
    </citation>
    <scope>PHOSPHORYLATION [LARGE SCALE ANALYSIS] AT SER-360</scope>
    <scope>IDENTIFICATION BY MASS SPECTROMETRY [LARGE SCALE ANALYSIS]</scope>
</reference>
<reference key="18">
    <citation type="journal article" date="2010" name="Cell Struct. Funct.">
        <title>Stability control of MTL1 mRNA by the RNA-binding protein Khd1p in yeast.</title>
        <authorList>
            <person name="Mauchi N."/>
            <person name="Ohtake Y."/>
            <person name="Irie K."/>
        </authorList>
    </citation>
    <scope>FUNCTION</scope>
    <scope>SUBCELLULAR LOCATION</scope>
</reference>
<accession>P38199</accession>
<accession>D6VPW7</accession>
<accession>E9P8X5</accession>
<evidence type="ECO:0000255" key="1">
    <source>
        <dbReference type="PROSITE-ProRule" id="PRU00117"/>
    </source>
</evidence>
<evidence type="ECO:0000256" key="2">
    <source>
        <dbReference type="SAM" id="MobiDB-lite"/>
    </source>
</evidence>
<evidence type="ECO:0000269" key="3">
    <source>
    </source>
</evidence>
<evidence type="ECO:0000269" key="4">
    <source>
    </source>
</evidence>
<evidence type="ECO:0000269" key="5">
    <source>
    </source>
</evidence>
<evidence type="ECO:0000269" key="6">
    <source>
    </source>
</evidence>
<evidence type="ECO:0000269" key="7">
    <source>
    </source>
</evidence>
<evidence type="ECO:0000269" key="8">
    <source>
    </source>
</evidence>
<evidence type="ECO:0000269" key="9">
    <source>
    </source>
</evidence>
<evidence type="ECO:0000305" key="10"/>
<evidence type="ECO:0007744" key="11">
    <source>
    </source>
</evidence>
<evidence type="ECO:0007744" key="12">
    <source>
    </source>
</evidence>
<evidence type="ECO:0007744" key="13">
    <source>
    </source>
</evidence>
<organism>
    <name type="scientific">Saccharomyces cerevisiae (strain ATCC 204508 / S288c)</name>
    <name type="common">Baker's yeast</name>
    <dbReference type="NCBI Taxonomy" id="559292"/>
    <lineage>
        <taxon>Eukaryota</taxon>
        <taxon>Fungi</taxon>
        <taxon>Dikarya</taxon>
        <taxon>Ascomycota</taxon>
        <taxon>Saccharomycotina</taxon>
        <taxon>Saccharomycetes</taxon>
        <taxon>Saccharomycetales</taxon>
        <taxon>Saccharomycetaceae</taxon>
        <taxon>Saccharomyces</taxon>
    </lineage>
</organism>
<name>HEK2_YEAST</name>
<protein>
    <recommendedName>
        <fullName>Heterogeneous nuclear rnp K-like protein 2</fullName>
    </recommendedName>
    <alternativeName>
        <fullName>KH domain-containing protein 1</fullName>
    </alternativeName>
</protein>
<gene>
    <name type="primary">HEK2</name>
    <name type="synonym">KHD1</name>
    <name type="ordered locus">YBL032W</name>
    <name type="ORF">YBL0418</name>
</gene>
<comment type="function">
    <text evidence="3 4 6 7 8 9">RNA-binding protein involved in the correct localization of transcripts in the cell. RNA localization is a widespread mechanism for achieving localized protein synthesis. Required for the asymmetric localization to the daughter cell nucleus of the ASH1 transcript, coding for a specific repressor of transcription. Overexpression inhibits translation of the ASH1 transcript. Involved in the stability of transcripts such as the MTL1 mRNA. Involved in structural and functional organization of telomeric chromatin and regulates silencing at the HMR locus.</text>
</comment>
<comment type="subunit">
    <text>Binds RNA.</text>
</comment>
<comment type="subcellular location">
    <subcellularLocation>
        <location>Cytoplasm</location>
    </subcellularLocation>
    <subcellularLocation>
        <location>Cytoplasm</location>
        <location>P-body</location>
    </subcellularLocation>
    <subcellularLocation>
        <location>Nucleus</location>
    </subcellularLocation>
    <subcellularLocation>
        <location>Chromosome</location>
        <location>Telomere</location>
    </subcellularLocation>
</comment>
<comment type="PTM">
    <text evidence="6">Phosphorylated by the plasma membrane-anchored casein kinase YCK1. Phosphorylation at its C-terminus reduces its RNA-binding capacity.</text>
</comment>
<comment type="miscellaneous">
    <text evidence="5">Present with 15600 molecules/cell in log phase SD medium.</text>
</comment>
<comment type="similarity">
    <text evidence="10">Belongs to the HEK2 family.</text>
</comment>
<dbReference type="EMBL" id="X77291">
    <property type="protein sequence ID" value="CAA54496.1"/>
    <property type="molecule type" value="Genomic_DNA"/>
</dbReference>
<dbReference type="EMBL" id="Z35793">
    <property type="protein sequence ID" value="CAA84852.1"/>
    <property type="molecule type" value="Genomic_DNA"/>
</dbReference>
<dbReference type="EMBL" id="AY692814">
    <property type="protein sequence ID" value="AAT92833.1"/>
    <property type="molecule type" value="Genomic_DNA"/>
</dbReference>
<dbReference type="EMBL" id="BK006936">
    <property type="protein sequence ID" value="DAA07087.1"/>
    <property type="molecule type" value="Genomic_DNA"/>
</dbReference>
<dbReference type="PIR" id="S45766">
    <property type="entry name" value="S45766"/>
</dbReference>
<dbReference type="RefSeq" id="NP_009521.1">
    <property type="nucleotide sequence ID" value="NM_001178272.1"/>
</dbReference>
<dbReference type="SMR" id="P38199"/>
<dbReference type="BioGRID" id="32665">
    <property type="interactions" value="1198"/>
</dbReference>
<dbReference type="DIP" id="DIP-3934N"/>
<dbReference type="FunCoup" id="P38199">
    <property type="interactions" value="314"/>
</dbReference>
<dbReference type="IntAct" id="P38199">
    <property type="interactions" value="52"/>
</dbReference>
<dbReference type="MINT" id="P38199"/>
<dbReference type="STRING" id="4932.YBL032W"/>
<dbReference type="iPTMnet" id="P38199"/>
<dbReference type="PaxDb" id="4932-YBL032W"/>
<dbReference type="PeptideAtlas" id="P38199"/>
<dbReference type="EnsemblFungi" id="YBL032W_mRNA">
    <property type="protein sequence ID" value="YBL032W"/>
    <property type="gene ID" value="YBL032W"/>
</dbReference>
<dbReference type="GeneID" id="852248"/>
<dbReference type="KEGG" id="sce:YBL032W"/>
<dbReference type="AGR" id="SGD:S000000128"/>
<dbReference type="SGD" id="S000000128">
    <property type="gene designation" value="HEK2"/>
</dbReference>
<dbReference type="VEuPathDB" id="FungiDB:YBL032W"/>
<dbReference type="eggNOG" id="KOG2190">
    <property type="taxonomic scope" value="Eukaryota"/>
</dbReference>
<dbReference type="GeneTree" id="ENSGT00940000153434"/>
<dbReference type="HOGENOM" id="CLU_022670_2_0_1"/>
<dbReference type="InParanoid" id="P38199"/>
<dbReference type="OMA" id="TERSYFP"/>
<dbReference type="OrthoDB" id="442947at2759"/>
<dbReference type="BioCyc" id="YEAST:G3O-28935-MONOMER"/>
<dbReference type="BioGRID-ORCS" id="852248">
    <property type="hits" value="7 hits in 10 CRISPR screens"/>
</dbReference>
<dbReference type="CD-CODE" id="A777E0F8">
    <property type="entry name" value="P-body"/>
</dbReference>
<dbReference type="CD-CODE" id="E03F929F">
    <property type="entry name" value="Stress granule"/>
</dbReference>
<dbReference type="PRO" id="PR:P38199"/>
<dbReference type="Proteomes" id="UP000002311">
    <property type="component" value="Chromosome II"/>
</dbReference>
<dbReference type="RNAct" id="P38199">
    <property type="molecule type" value="protein"/>
</dbReference>
<dbReference type="GO" id="GO:0000781">
    <property type="term" value="C:chromosome, telomeric region"/>
    <property type="evidence" value="ECO:0000314"/>
    <property type="project" value="SGD"/>
</dbReference>
<dbReference type="GO" id="GO:0005737">
    <property type="term" value="C:cytoplasm"/>
    <property type="evidence" value="ECO:0000314"/>
    <property type="project" value="SGD"/>
</dbReference>
<dbReference type="GO" id="GO:0005634">
    <property type="term" value="C:nucleus"/>
    <property type="evidence" value="ECO:0000318"/>
    <property type="project" value="GO_Central"/>
</dbReference>
<dbReference type="GO" id="GO:0000932">
    <property type="term" value="C:P-body"/>
    <property type="evidence" value="ECO:0000314"/>
    <property type="project" value="SGD"/>
</dbReference>
<dbReference type="GO" id="GO:0035925">
    <property type="term" value="F:mRNA 3'-UTR AU-rich region binding"/>
    <property type="evidence" value="ECO:0000318"/>
    <property type="project" value="GO_Central"/>
</dbReference>
<dbReference type="GO" id="GO:0003729">
    <property type="term" value="F:mRNA binding"/>
    <property type="evidence" value="ECO:0000314"/>
    <property type="project" value="SGD"/>
</dbReference>
<dbReference type="GO" id="GO:0070935">
    <property type="term" value="P:3'-UTR-mediated mRNA stabilization"/>
    <property type="evidence" value="ECO:0000318"/>
    <property type="project" value="GO_Central"/>
</dbReference>
<dbReference type="GO" id="GO:0006325">
    <property type="term" value="P:chromatin organization"/>
    <property type="evidence" value="ECO:0007669"/>
    <property type="project" value="UniProtKB-KW"/>
</dbReference>
<dbReference type="GO" id="GO:0008298">
    <property type="term" value="P:intracellular mRNA localization"/>
    <property type="evidence" value="ECO:0000314"/>
    <property type="project" value="SGD"/>
</dbReference>
<dbReference type="GO" id="GO:0048255">
    <property type="term" value="P:mRNA stabilization"/>
    <property type="evidence" value="ECO:0000315"/>
    <property type="project" value="SGD"/>
</dbReference>
<dbReference type="GO" id="GO:0051028">
    <property type="term" value="P:mRNA transport"/>
    <property type="evidence" value="ECO:0007669"/>
    <property type="project" value="UniProtKB-KW"/>
</dbReference>
<dbReference type="GO" id="GO:0006417">
    <property type="term" value="P:regulation of translation"/>
    <property type="evidence" value="ECO:0007669"/>
    <property type="project" value="UniProtKB-KW"/>
</dbReference>
<dbReference type="GO" id="GO:0000723">
    <property type="term" value="P:telomere maintenance"/>
    <property type="evidence" value="ECO:0000316"/>
    <property type="project" value="SGD"/>
</dbReference>
<dbReference type="GO" id="GO:0007004">
    <property type="term" value="P:telomere maintenance via telomerase"/>
    <property type="evidence" value="ECO:0000315"/>
    <property type="project" value="SGD"/>
</dbReference>
<dbReference type="CDD" id="cd00105">
    <property type="entry name" value="KH-I"/>
    <property type="match status" value="1"/>
</dbReference>
<dbReference type="CDD" id="cd22455">
    <property type="entry name" value="KH-I_Rnc1_rpt1"/>
    <property type="match status" value="1"/>
</dbReference>
<dbReference type="CDD" id="cd22456">
    <property type="entry name" value="KH-I_Rnc1_rpt2"/>
    <property type="match status" value="1"/>
</dbReference>
<dbReference type="Gene3D" id="3.30.1370.10">
    <property type="entry name" value="K Homology domain, type 1"/>
    <property type="match status" value="3"/>
</dbReference>
<dbReference type="InterPro" id="IPR004087">
    <property type="entry name" value="KH_dom"/>
</dbReference>
<dbReference type="InterPro" id="IPR004088">
    <property type="entry name" value="KH_dom_type_1"/>
</dbReference>
<dbReference type="InterPro" id="IPR036612">
    <property type="entry name" value="KH_dom_type_1_sf"/>
</dbReference>
<dbReference type="PANTHER" id="PTHR10288">
    <property type="entry name" value="KH DOMAIN CONTAINING RNA BINDING PROTEIN"/>
    <property type="match status" value="1"/>
</dbReference>
<dbReference type="Pfam" id="PF00013">
    <property type="entry name" value="KH_1"/>
    <property type="match status" value="3"/>
</dbReference>
<dbReference type="SMART" id="SM00322">
    <property type="entry name" value="KH"/>
    <property type="match status" value="3"/>
</dbReference>
<dbReference type="SUPFAM" id="SSF54791">
    <property type="entry name" value="Eukaryotic type KH-domain (KH-domain type I)"/>
    <property type="match status" value="3"/>
</dbReference>
<dbReference type="PROSITE" id="PS50084">
    <property type="entry name" value="KH_TYPE_1"/>
    <property type="match status" value="3"/>
</dbReference>
<proteinExistence type="evidence at protein level"/>
<keyword id="KW-0156">Chromatin regulator</keyword>
<keyword id="KW-0158">Chromosome</keyword>
<keyword id="KW-0963">Cytoplasm</keyword>
<keyword id="KW-0509">mRNA transport</keyword>
<keyword id="KW-0539">Nucleus</keyword>
<keyword id="KW-0597">Phosphoprotein</keyword>
<keyword id="KW-1185">Reference proteome</keyword>
<keyword id="KW-0677">Repeat</keyword>
<keyword id="KW-0694">RNA-binding</keyword>
<keyword id="KW-0779">Telomere</keyword>
<keyword id="KW-0810">Translation regulation</keyword>
<keyword id="KW-0813">Transport</keyword>
<feature type="chain" id="PRO_0000050161" description="Heterogeneous nuclear rnp K-like protein 2">
    <location>
        <begin position="1"/>
        <end position="381"/>
    </location>
</feature>
<feature type="domain" description="KH 1" evidence="1">
    <location>
        <begin position="43"/>
        <end position="107"/>
    </location>
</feature>
<feature type="domain" description="KH 2" evidence="1">
    <location>
        <begin position="156"/>
        <end position="221"/>
    </location>
</feature>
<feature type="domain" description="KH 3" evidence="1">
    <location>
        <begin position="258"/>
        <end position="326"/>
    </location>
</feature>
<feature type="region of interest" description="Disordered" evidence="2">
    <location>
        <begin position="1"/>
        <end position="34"/>
    </location>
</feature>
<feature type="region of interest" description="Disordered" evidence="2">
    <location>
        <begin position="344"/>
        <end position="381"/>
    </location>
</feature>
<feature type="compositionally biased region" description="Low complexity" evidence="2">
    <location>
        <begin position="15"/>
        <end position="33"/>
    </location>
</feature>
<feature type="compositionally biased region" description="Basic and acidic residues" evidence="2">
    <location>
        <begin position="370"/>
        <end position="381"/>
    </location>
</feature>
<feature type="modified residue" description="Phosphoserine" evidence="11">
    <location>
        <position position="358"/>
    </location>
</feature>
<feature type="modified residue" description="Phosphoserine" evidence="12 13">
    <location>
        <position position="360"/>
    </location>
</feature>
<feature type="modified residue" description="Phosphoserine" evidence="12">
    <location>
        <position position="362"/>
    </location>
</feature>
<feature type="sequence conflict" description="In Ref. 4; AAT92833." evidence="10" ref="4">
    <original>S</original>
    <variation>P</variation>
    <location>
        <position position="362"/>
    </location>
</feature>